<accession>B8G3J6</accession>
<protein>
    <recommendedName>
        <fullName evidence="1">DNA replication and repair protein RecF</fullName>
    </recommendedName>
</protein>
<sequence length="392" mass="43965">MYIHHLALRDFRNYRRQDVALSPTTILLYGPNAAGKTSLLEAIFYLATTRSPRLSSDRDLVRWDAVGEAGAPPFARIAADVERRIGPVRLEILVQRRLDDGGQPLNGAQKLVRIDKRPARAIDLIGQLRVVLFTPTDVMLVDGPPAERRRYLDITLSQLDPHYVRTLAYYQKILLQRNSLLRAWREQRRLPRNVDAELGYWDQELAAAGGYLLAERLRAVVELSALAGSIYRKISGGEHELQIEYIASCDLDAARDAGSLAERLRLAFAAQRTDELARGQTLCGPHRDDLVFNVAGVNLGRYGSRGQQRTIALALKIGEAELMQQRGGDAPVLLLDDVLSELDNRRRMHLLDLILRPQQQTLLTATNLSDFSADFLAAARRFRVEDGQLFAG</sequence>
<organism>
    <name type="scientific">Chloroflexus aggregans (strain MD-66 / DSM 9485)</name>
    <dbReference type="NCBI Taxonomy" id="326427"/>
    <lineage>
        <taxon>Bacteria</taxon>
        <taxon>Bacillati</taxon>
        <taxon>Chloroflexota</taxon>
        <taxon>Chloroflexia</taxon>
        <taxon>Chloroflexales</taxon>
        <taxon>Chloroflexineae</taxon>
        <taxon>Chloroflexaceae</taxon>
        <taxon>Chloroflexus</taxon>
    </lineage>
</organism>
<gene>
    <name evidence="1" type="primary">recF</name>
    <name type="ordered locus">Cagg_0434</name>
</gene>
<dbReference type="EMBL" id="CP001337">
    <property type="protein sequence ID" value="ACL23379.1"/>
    <property type="molecule type" value="Genomic_DNA"/>
</dbReference>
<dbReference type="RefSeq" id="WP_012615745.1">
    <property type="nucleotide sequence ID" value="NC_011831.1"/>
</dbReference>
<dbReference type="SMR" id="B8G3J6"/>
<dbReference type="STRING" id="326427.Cagg_0434"/>
<dbReference type="KEGG" id="cag:Cagg_0434"/>
<dbReference type="eggNOG" id="COG1195">
    <property type="taxonomic scope" value="Bacteria"/>
</dbReference>
<dbReference type="HOGENOM" id="CLU_040267_0_1_0"/>
<dbReference type="OrthoDB" id="9803889at2"/>
<dbReference type="Proteomes" id="UP000002508">
    <property type="component" value="Chromosome"/>
</dbReference>
<dbReference type="GO" id="GO:0005737">
    <property type="term" value="C:cytoplasm"/>
    <property type="evidence" value="ECO:0007669"/>
    <property type="project" value="UniProtKB-SubCell"/>
</dbReference>
<dbReference type="GO" id="GO:0005524">
    <property type="term" value="F:ATP binding"/>
    <property type="evidence" value="ECO:0007669"/>
    <property type="project" value="UniProtKB-UniRule"/>
</dbReference>
<dbReference type="GO" id="GO:0016887">
    <property type="term" value="F:ATP hydrolysis activity"/>
    <property type="evidence" value="ECO:0007669"/>
    <property type="project" value="InterPro"/>
</dbReference>
<dbReference type="GO" id="GO:0003697">
    <property type="term" value="F:single-stranded DNA binding"/>
    <property type="evidence" value="ECO:0007669"/>
    <property type="project" value="UniProtKB-UniRule"/>
</dbReference>
<dbReference type="GO" id="GO:0006260">
    <property type="term" value="P:DNA replication"/>
    <property type="evidence" value="ECO:0007669"/>
    <property type="project" value="UniProtKB-UniRule"/>
</dbReference>
<dbReference type="GO" id="GO:0000731">
    <property type="term" value="P:DNA synthesis involved in DNA repair"/>
    <property type="evidence" value="ECO:0007669"/>
    <property type="project" value="TreeGrafter"/>
</dbReference>
<dbReference type="GO" id="GO:0006302">
    <property type="term" value="P:double-strand break repair"/>
    <property type="evidence" value="ECO:0007669"/>
    <property type="project" value="TreeGrafter"/>
</dbReference>
<dbReference type="GO" id="GO:0009432">
    <property type="term" value="P:SOS response"/>
    <property type="evidence" value="ECO:0007669"/>
    <property type="project" value="UniProtKB-UniRule"/>
</dbReference>
<dbReference type="Gene3D" id="3.40.50.300">
    <property type="entry name" value="P-loop containing nucleotide triphosphate hydrolases"/>
    <property type="match status" value="1"/>
</dbReference>
<dbReference type="Gene3D" id="1.20.1050.90">
    <property type="entry name" value="RecF/RecN/SMC, N-terminal domain"/>
    <property type="match status" value="1"/>
</dbReference>
<dbReference type="HAMAP" id="MF_00365">
    <property type="entry name" value="RecF"/>
    <property type="match status" value="1"/>
</dbReference>
<dbReference type="InterPro" id="IPR003593">
    <property type="entry name" value="AAA+_ATPase"/>
</dbReference>
<dbReference type="InterPro" id="IPR001238">
    <property type="entry name" value="DNA-binding_RecF"/>
</dbReference>
<dbReference type="InterPro" id="IPR018078">
    <property type="entry name" value="DNA-binding_RecF_CS"/>
</dbReference>
<dbReference type="InterPro" id="IPR027417">
    <property type="entry name" value="P-loop_NTPase"/>
</dbReference>
<dbReference type="InterPro" id="IPR003395">
    <property type="entry name" value="RecF/RecN/SMC_N"/>
</dbReference>
<dbReference type="InterPro" id="IPR042174">
    <property type="entry name" value="RecF_2"/>
</dbReference>
<dbReference type="NCBIfam" id="TIGR00611">
    <property type="entry name" value="recf"/>
    <property type="match status" value="1"/>
</dbReference>
<dbReference type="PANTHER" id="PTHR32182">
    <property type="entry name" value="DNA REPLICATION AND REPAIR PROTEIN RECF"/>
    <property type="match status" value="1"/>
</dbReference>
<dbReference type="PANTHER" id="PTHR32182:SF0">
    <property type="entry name" value="DNA REPLICATION AND REPAIR PROTEIN RECF"/>
    <property type="match status" value="1"/>
</dbReference>
<dbReference type="Pfam" id="PF02463">
    <property type="entry name" value="SMC_N"/>
    <property type="match status" value="1"/>
</dbReference>
<dbReference type="SMART" id="SM00382">
    <property type="entry name" value="AAA"/>
    <property type="match status" value="1"/>
</dbReference>
<dbReference type="SUPFAM" id="SSF52540">
    <property type="entry name" value="P-loop containing nucleoside triphosphate hydrolases"/>
    <property type="match status" value="1"/>
</dbReference>
<dbReference type="PROSITE" id="PS00617">
    <property type="entry name" value="RECF_1"/>
    <property type="match status" value="1"/>
</dbReference>
<dbReference type="PROSITE" id="PS00618">
    <property type="entry name" value="RECF_2"/>
    <property type="match status" value="1"/>
</dbReference>
<name>RECF_CHLAD</name>
<feature type="chain" id="PRO_1000133678" description="DNA replication and repair protein RecF">
    <location>
        <begin position="1"/>
        <end position="392"/>
    </location>
</feature>
<feature type="binding site" evidence="1">
    <location>
        <begin position="30"/>
        <end position="37"/>
    </location>
    <ligand>
        <name>ATP</name>
        <dbReference type="ChEBI" id="CHEBI:30616"/>
    </ligand>
</feature>
<comment type="function">
    <text evidence="1">The RecF protein is involved in DNA metabolism; it is required for DNA replication and normal SOS inducibility. RecF binds preferentially to single-stranded, linear DNA. It also seems to bind ATP.</text>
</comment>
<comment type="subcellular location">
    <subcellularLocation>
        <location evidence="1">Cytoplasm</location>
    </subcellularLocation>
</comment>
<comment type="similarity">
    <text evidence="1">Belongs to the RecF family.</text>
</comment>
<reference key="1">
    <citation type="submission" date="2008-12" db="EMBL/GenBank/DDBJ databases">
        <title>Complete sequence of Chloroflexus aggregans DSM 9485.</title>
        <authorList>
            <consortium name="US DOE Joint Genome Institute"/>
            <person name="Lucas S."/>
            <person name="Copeland A."/>
            <person name="Lapidus A."/>
            <person name="Glavina del Rio T."/>
            <person name="Dalin E."/>
            <person name="Tice H."/>
            <person name="Pitluck S."/>
            <person name="Foster B."/>
            <person name="Larimer F."/>
            <person name="Land M."/>
            <person name="Hauser L."/>
            <person name="Kyrpides N."/>
            <person name="Mikhailova N."/>
            <person name="Bryant D.A."/>
            <person name="Richardson P."/>
        </authorList>
    </citation>
    <scope>NUCLEOTIDE SEQUENCE [LARGE SCALE GENOMIC DNA]</scope>
    <source>
        <strain>MD-66 / DSM 9485</strain>
    </source>
</reference>
<evidence type="ECO:0000255" key="1">
    <source>
        <dbReference type="HAMAP-Rule" id="MF_00365"/>
    </source>
</evidence>
<keyword id="KW-0067">ATP-binding</keyword>
<keyword id="KW-0963">Cytoplasm</keyword>
<keyword id="KW-0227">DNA damage</keyword>
<keyword id="KW-0234">DNA repair</keyword>
<keyword id="KW-0235">DNA replication</keyword>
<keyword id="KW-0238">DNA-binding</keyword>
<keyword id="KW-0547">Nucleotide-binding</keyword>
<keyword id="KW-0742">SOS response</keyword>
<proteinExistence type="inferred from homology"/>